<name>TULP_DROYA</name>
<comment type="subcellular location">
    <subcellularLocation>
        <location evidence="1">Cytoplasm</location>
    </subcellularLocation>
    <subcellularLocation>
        <location evidence="1">Nucleus</location>
    </subcellularLocation>
    <subcellularLocation>
        <location evidence="1">Cell projection</location>
        <location evidence="1">Cilium membrane</location>
        <topology evidence="1">Peripheral membrane protein</topology>
    </subcellularLocation>
    <subcellularLocation>
        <location evidence="1">Cell projection</location>
        <location evidence="1">Rhabdomere</location>
    </subcellularLocation>
</comment>
<comment type="similarity">
    <text evidence="2">Belongs to the TUB family.</text>
</comment>
<reference evidence="4" key="1">
    <citation type="journal article" date="2007" name="Nature">
        <title>Evolution of genes and genomes on the Drosophila phylogeny.</title>
        <authorList>
            <consortium name="Drosophila 12 genomes consortium"/>
        </authorList>
    </citation>
    <scope>NUCLEOTIDE SEQUENCE [LARGE SCALE GENOMIC DNA]</scope>
    <source>
        <strain evidence="4">Tai18E2 / Tucson 14021-0261.01</strain>
    </source>
</reference>
<protein>
    <recommendedName>
        <fullName evidence="1">Protein king tubby</fullName>
    </recommendedName>
</protein>
<organism>
    <name type="scientific">Drosophila yakuba</name>
    <name type="common">Fruit fly</name>
    <dbReference type="NCBI Taxonomy" id="7245"/>
    <lineage>
        <taxon>Eukaryota</taxon>
        <taxon>Metazoa</taxon>
        <taxon>Ecdysozoa</taxon>
        <taxon>Arthropoda</taxon>
        <taxon>Hexapoda</taxon>
        <taxon>Insecta</taxon>
        <taxon>Pterygota</taxon>
        <taxon>Neoptera</taxon>
        <taxon>Endopterygota</taxon>
        <taxon>Diptera</taxon>
        <taxon>Brachycera</taxon>
        <taxon>Muscomorpha</taxon>
        <taxon>Ephydroidea</taxon>
        <taxon>Drosophilidae</taxon>
        <taxon>Drosophila</taxon>
        <taxon>Sophophora</taxon>
    </lineage>
</organism>
<evidence type="ECO:0000250" key="1">
    <source>
        <dbReference type="UniProtKB" id="Q86PC9"/>
    </source>
</evidence>
<evidence type="ECO:0000255" key="2"/>
<evidence type="ECO:0000256" key="3">
    <source>
        <dbReference type="SAM" id="MobiDB-lite"/>
    </source>
</evidence>
<evidence type="ECO:0000312" key="4">
    <source>
        <dbReference type="EMBL" id="EDW91298.1"/>
    </source>
</evidence>
<dbReference type="EMBL" id="CM000158">
    <property type="protein sequence ID" value="EDW91298.1"/>
    <property type="molecule type" value="Genomic_DNA"/>
</dbReference>
<dbReference type="SMR" id="B4P9H8"/>
<dbReference type="EnsemblMetazoa" id="FBtr0258686">
    <property type="protein sequence ID" value="FBpp0257178"/>
    <property type="gene ID" value="FBgn0229934"/>
</dbReference>
<dbReference type="EnsemblMetazoa" id="XM_002091550.4">
    <property type="protein sequence ID" value="XP_002091586.2"/>
    <property type="gene ID" value="LOC6530695"/>
</dbReference>
<dbReference type="GeneID" id="6530695"/>
<dbReference type="KEGG" id="dya:Dyak_GE12168"/>
<dbReference type="CTD" id="37400"/>
<dbReference type="eggNOG" id="KOG2502">
    <property type="taxonomic scope" value="Eukaryota"/>
</dbReference>
<dbReference type="HOGENOM" id="CLU_028236_1_1_1"/>
<dbReference type="OMA" id="GYDGPMQ"/>
<dbReference type="OrthoDB" id="8775810at2759"/>
<dbReference type="PhylomeDB" id="B4P9H8"/>
<dbReference type="ChiTaRS" id="ktub">
    <property type="organism name" value="fly"/>
</dbReference>
<dbReference type="Proteomes" id="UP000002282">
    <property type="component" value="Chromosome 2R"/>
</dbReference>
<dbReference type="GO" id="GO:0060170">
    <property type="term" value="C:ciliary membrane"/>
    <property type="evidence" value="ECO:0007669"/>
    <property type="project" value="UniProtKB-SubCell"/>
</dbReference>
<dbReference type="GO" id="GO:0005737">
    <property type="term" value="C:cytoplasm"/>
    <property type="evidence" value="ECO:0000250"/>
    <property type="project" value="UniProtKB"/>
</dbReference>
<dbReference type="GO" id="GO:0005634">
    <property type="term" value="C:nucleus"/>
    <property type="evidence" value="ECO:0000250"/>
    <property type="project" value="UniProtKB"/>
</dbReference>
<dbReference type="GO" id="GO:0016028">
    <property type="term" value="C:rhabdomere"/>
    <property type="evidence" value="ECO:0007669"/>
    <property type="project" value="UniProtKB-SubCell"/>
</dbReference>
<dbReference type="GO" id="GO:0061512">
    <property type="term" value="P:protein localization to cilium"/>
    <property type="evidence" value="ECO:0007669"/>
    <property type="project" value="TreeGrafter"/>
</dbReference>
<dbReference type="FunFam" id="3.20.90.10:FF:000001">
    <property type="entry name" value="Tubby-like protein"/>
    <property type="match status" value="1"/>
</dbReference>
<dbReference type="Gene3D" id="3.20.90.10">
    <property type="entry name" value="Tubby Protein, Chain A"/>
    <property type="match status" value="1"/>
</dbReference>
<dbReference type="InterPro" id="IPR025659">
    <property type="entry name" value="Tubby-like_C"/>
</dbReference>
<dbReference type="InterPro" id="IPR000007">
    <property type="entry name" value="Tubby_C"/>
</dbReference>
<dbReference type="InterPro" id="IPR018066">
    <property type="entry name" value="Tubby_C_CS"/>
</dbReference>
<dbReference type="PANTHER" id="PTHR16517:SF7">
    <property type="entry name" value="PROTEIN KING TUBBY"/>
    <property type="match status" value="1"/>
</dbReference>
<dbReference type="PANTHER" id="PTHR16517">
    <property type="entry name" value="TUBBY-RELATED"/>
    <property type="match status" value="1"/>
</dbReference>
<dbReference type="Pfam" id="PF01167">
    <property type="entry name" value="Tub"/>
    <property type="match status" value="1"/>
</dbReference>
<dbReference type="PRINTS" id="PR01573">
    <property type="entry name" value="SUPERTUBBY"/>
</dbReference>
<dbReference type="SUPFAM" id="SSF54518">
    <property type="entry name" value="Tubby C-terminal domain-like"/>
    <property type="match status" value="1"/>
</dbReference>
<dbReference type="PROSITE" id="PS01200">
    <property type="entry name" value="TUB_1"/>
    <property type="match status" value="1"/>
</dbReference>
<dbReference type="PROSITE" id="PS01201">
    <property type="entry name" value="TUB_2"/>
    <property type="match status" value="1"/>
</dbReference>
<sequence length="443" mass="49234">MEAYIRQKRASPGMVQASDLQINRPMSGMRSNSRELHAYDGPMQFISSPQNPDQILTNGSPGGITPVAVNTSRNHSNNMRSLSTINQEADLIEEISSHELEDEESSPVTVIEQHQQSASHSANSTQSQKPRARQHSFSDNLDEDDYTNRNVAAAAPVRPAGMASSPYKDATLEGSSNGTGNGTGGESEGDVIGNIDQFVMQPAPQGVLYKCRITRDRKGMDRGLFPIYYLHLERDYGKKIFLLGGRKRKKSKTSNYIVSCDPTDLSRNADGFCGKLRSNVFGTSFTVFDNGNKESTESPRLDLAVIIYDTNILGFKGPRNMTVILPGMTEDDQRVKISSADPKQQGILDLWKMKNMDNIVELHNKTPVWNDETQSYVLNFHGRVTQASVKNFQLVHDSDPEYIVMQFGRTSEDVFTMDYRYPLCAMQAFAIALSSFDGKIACE</sequence>
<feature type="chain" id="PRO_0000400846" description="Protein king tubby">
    <location>
        <begin position="1"/>
        <end position="443"/>
    </location>
</feature>
<feature type="region of interest" description="Disordered" evidence="3">
    <location>
        <begin position="57"/>
        <end position="85"/>
    </location>
</feature>
<feature type="region of interest" description="Disordered" evidence="3">
    <location>
        <begin position="98"/>
        <end position="189"/>
    </location>
</feature>
<feature type="compositionally biased region" description="Polar residues" evidence="3">
    <location>
        <begin position="68"/>
        <end position="85"/>
    </location>
</feature>
<feature type="compositionally biased region" description="Low complexity" evidence="3">
    <location>
        <begin position="113"/>
        <end position="128"/>
    </location>
</feature>
<feature type="compositionally biased region" description="Low complexity" evidence="3">
    <location>
        <begin position="148"/>
        <end position="160"/>
    </location>
</feature>
<feature type="compositionally biased region" description="Gly residues" evidence="3">
    <location>
        <begin position="177"/>
        <end position="186"/>
    </location>
</feature>
<feature type="modified residue" description="Phosphoserine" evidence="1">
    <location>
        <position position="136"/>
    </location>
</feature>
<proteinExistence type="inferred from homology"/>
<keyword id="KW-1003">Cell membrane</keyword>
<keyword id="KW-0966">Cell projection</keyword>
<keyword id="KW-0963">Cytoplasm</keyword>
<keyword id="KW-0472">Membrane</keyword>
<keyword id="KW-0539">Nucleus</keyword>
<keyword id="KW-0597">Phosphoprotein</keyword>
<accession>B4P9H8</accession>
<gene>
    <name evidence="1" type="primary">king-tubby</name>
    <name type="ORF">GE12168</name>
</gene>